<gene>
    <name type="primary">Ddr1</name>
    <name type="synonym">Cak</name>
    <name type="synonym">Eddr1</name>
    <name type="synonym">Mpk6</name>
</gene>
<evidence type="ECO:0000250" key="1"/>
<evidence type="ECO:0000250" key="2">
    <source>
        <dbReference type="UniProtKB" id="Q08345"/>
    </source>
</evidence>
<evidence type="ECO:0000255" key="3"/>
<evidence type="ECO:0000255" key="4">
    <source>
        <dbReference type="PROSITE-ProRule" id="PRU00081"/>
    </source>
</evidence>
<evidence type="ECO:0000255" key="5">
    <source>
        <dbReference type="PROSITE-ProRule" id="PRU00159"/>
    </source>
</evidence>
<evidence type="ECO:0000255" key="6">
    <source>
        <dbReference type="PROSITE-ProRule" id="PRU10028"/>
    </source>
</evidence>
<evidence type="ECO:0000256" key="7">
    <source>
        <dbReference type="SAM" id="MobiDB-lite"/>
    </source>
</evidence>
<evidence type="ECO:0000269" key="8">
    <source>
    </source>
</evidence>
<evidence type="ECO:0000269" key="9">
    <source>
    </source>
</evidence>
<evidence type="ECO:0000269" key="10">
    <source>
    </source>
</evidence>
<evidence type="ECO:0000269" key="11">
    <source>
    </source>
</evidence>
<evidence type="ECO:0000303" key="12">
    <source>
    </source>
</evidence>
<proteinExistence type="evidence at transcript level"/>
<accession>Q03146</accession>
<reference key="1">
    <citation type="journal article" date="1996" name="Oncogene">
        <title>Identification of two isoforms of the Cak receptor kinase that are coexpressed in breast tumor cell lines.</title>
        <authorList>
            <person name="Perez J.L."/>
            <person name="Jing S.Q."/>
            <person name="Wong T.W."/>
        </authorList>
    </citation>
    <scope>NUCLEOTIDE SEQUENCE [MRNA] (ISOFORMS 1 AND 2)</scope>
    <source>
        <strain>C57BL/6J</strain>
    </source>
</reference>
<reference key="2">
    <citation type="journal article" date="1992" name="Oncogene">
        <title>An Eph-related receptor protein tyrosine kinase gene segmentally expressed in the developing mouse hindbrain.</title>
        <authorList>
            <person name="Gilardi-Hebenstreit P."/>
            <person name="Nieto M.A."/>
            <person name="Frain M."/>
            <person name="Mattei M.-G."/>
            <person name="Chestier A."/>
            <person name="Wilkinson D.G."/>
            <person name="Charnay P."/>
        </authorList>
    </citation>
    <scope>NUCLEOTIDE SEQUENCE [MRNA] OF 766-822</scope>
    <source>
        <strain>C57BL/6J</strain>
        <tissue>Embryonic brain</tissue>
    </source>
</reference>
<reference key="3">
    <citation type="journal article" date="2001" name="Mol. Cell. Biol.">
        <title>Discoidin domain receptor 1 tyrosine kinase has an essential role in mammary gland development.</title>
        <authorList>
            <person name="Vogel W.F."/>
            <person name="Aszodi A."/>
            <person name="Alves F."/>
            <person name="Pawson T."/>
        </authorList>
    </citation>
    <scope>DISRUPTION PHENOTYPE</scope>
</reference>
<reference key="4">
    <citation type="journal article" date="2002" name="Circ. Res.">
        <title>Tyrosine kinase activity of discoidin domain receptor 1 is necessary for smooth muscle cell migration and matrix metalloproteinase expression.</title>
        <authorList>
            <person name="Hou G."/>
            <person name="Vogel W.F."/>
            <person name="Bendeck M.P."/>
        </authorList>
    </citation>
    <scope>FUNCTION</scope>
</reference>
<reference key="5">
    <citation type="journal article" date="2004" name="Kidney Int.">
        <title>DDR1-deficient mice show localized subepithelial GBM thickening with focal loss of slit diaphragms and proteinuria.</title>
        <authorList>
            <person name="Gross O."/>
            <person name="Beirowski B."/>
            <person name="Harvey S.J."/>
            <person name="McFadden C."/>
            <person name="Chen D."/>
            <person name="Tam S."/>
            <person name="Thorner P.S."/>
            <person name="Smyth N."/>
            <person name="Addicks K."/>
            <person name="Bloch W."/>
            <person name="Ninomiya Y."/>
            <person name="Sado Y."/>
            <person name="Weber M."/>
            <person name="Vogel W.F."/>
        </authorList>
    </citation>
    <scope>DISRUPTION PHENOTYPE</scope>
</reference>
<reference key="6">
    <citation type="journal article" date="2008" name="Lab. Invest.">
        <title>Inner ear defects and hearing loss in mice lacking the collagen receptor DDR1.</title>
        <authorList>
            <person name="Meyer zum Gottesberge A.M."/>
            <person name="Gross O."/>
            <person name="Becker-Lendzian U."/>
            <person name="Massing T."/>
            <person name="Vogel W.F."/>
        </authorList>
    </citation>
    <scope>DISRUPTION PHENOTYPE</scope>
    <scope>TISSUE SPECIFICITY</scope>
</reference>
<dbReference type="EC" id="2.7.10.1"/>
<dbReference type="EMBL" id="L57509">
    <property type="protein sequence ID" value="AAB05209.1"/>
    <property type="molecule type" value="mRNA"/>
</dbReference>
<dbReference type="EMBL" id="X57240">
    <property type="protein sequence ID" value="CAA40516.1"/>
    <property type="molecule type" value="mRNA"/>
</dbReference>
<dbReference type="CCDS" id="CCDS28703.1">
    <molecule id="Q03146-1"/>
</dbReference>
<dbReference type="CCDS" id="CCDS37603.1">
    <molecule id="Q03146-2"/>
</dbReference>
<dbReference type="PIR" id="S30502">
    <property type="entry name" value="S30502"/>
</dbReference>
<dbReference type="RefSeq" id="NP_001185760.1">
    <molecule id="Q03146-1"/>
    <property type="nucleotide sequence ID" value="NM_001198831.1"/>
</dbReference>
<dbReference type="RefSeq" id="NP_001185762.1">
    <molecule id="Q03146-1"/>
    <property type="nucleotide sequence ID" value="NM_001198833.1"/>
</dbReference>
<dbReference type="RefSeq" id="NP_001411562.1">
    <molecule id="Q03146-1"/>
    <property type="nucleotide sequence ID" value="NM_001424633.1"/>
</dbReference>
<dbReference type="RefSeq" id="NP_001411564.1">
    <molecule id="Q03146-1"/>
    <property type="nucleotide sequence ID" value="NM_001424635.1"/>
</dbReference>
<dbReference type="RefSeq" id="NP_001411566.1">
    <molecule id="Q03146-2"/>
    <property type="nucleotide sequence ID" value="NM_001424637.1"/>
</dbReference>
<dbReference type="RefSeq" id="NP_001411568.1">
    <molecule id="Q03146-2"/>
    <property type="nucleotide sequence ID" value="NM_001424639.1"/>
</dbReference>
<dbReference type="RefSeq" id="NP_001411569.1">
    <molecule id="Q03146-2"/>
    <property type="nucleotide sequence ID" value="NM_001424640.1"/>
</dbReference>
<dbReference type="RefSeq" id="NP_001411570.1">
    <molecule id="Q03146-2"/>
    <property type="nucleotide sequence ID" value="NM_001424641.1"/>
</dbReference>
<dbReference type="RefSeq" id="NP_031610.1">
    <molecule id="Q03146-1"/>
    <property type="nucleotide sequence ID" value="NM_007584.3"/>
</dbReference>
<dbReference type="RefSeq" id="NP_766550.1">
    <molecule id="Q03146-2"/>
    <property type="nucleotide sequence ID" value="NM_172962.2"/>
</dbReference>
<dbReference type="RefSeq" id="XP_006523596.1">
    <property type="nucleotide sequence ID" value="XM_006523533.1"/>
</dbReference>
<dbReference type="RefSeq" id="XP_006523597.1">
    <property type="nucleotide sequence ID" value="XM_006523534.1"/>
</dbReference>
<dbReference type="RefSeq" id="XP_006523598.1">
    <molecule id="Q03146-1"/>
    <property type="nucleotide sequence ID" value="XM_006523535.5"/>
</dbReference>
<dbReference type="RefSeq" id="XP_006523599.1">
    <molecule id="Q03146-1"/>
    <property type="nucleotide sequence ID" value="XM_006523536.4"/>
</dbReference>
<dbReference type="RefSeq" id="XP_006523600.1">
    <molecule id="Q03146-1"/>
    <property type="nucleotide sequence ID" value="XM_006523537.3"/>
</dbReference>
<dbReference type="RefSeq" id="XP_011244561.1">
    <molecule id="Q03146-1"/>
    <property type="nucleotide sequence ID" value="XM_011246259.3"/>
</dbReference>
<dbReference type="RefSeq" id="XP_030105324.1">
    <molecule id="Q03146-2"/>
    <property type="nucleotide sequence ID" value="XM_030249464.2"/>
</dbReference>
<dbReference type="RefSeq" id="XP_036016169.1">
    <molecule id="Q03146-2"/>
    <property type="nucleotide sequence ID" value="XM_036160276.1"/>
</dbReference>
<dbReference type="RefSeq" id="XP_036016171.1">
    <molecule id="Q03146-2"/>
    <property type="nucleotide sequence ID" value="XM_036160278.1"/>
</dbReference>
<dbReference type="RefSeq" id="XP_036016172.1">
    <molecule id="Q03146-1"/>
    <property type="nucleotide sequence ID" value="XM_036160279.1"/>
</dbReference>
<dbReference type="RefSeq" id="XP_036016173.1">
    <molecule id="Q03146-2"/>
    <property type="nucleotide sequence ID" value="XM_036160280.1"/>
</dbReference>
<dbReference type="SMR" id="Q03146"/>
<dbReference type="BioGRID" id="198447">
    <property type="interactions" value="13"/>
</dbReference>
<dbReference type="FunCoup" id="Q03146">
    <property type="interactions" value="178"/>
</dbReference>
<dbReference type="IntAct" id="Q03146">
    <property type="interactions" value="1"/>
</dbReference>
<dbReference type="MINT" id="Q03146"/>
<dbReference type="STRING" id="10090.ENSMUSP00000112570"/>
<dbReference type="ChEMBL" id="CHEMBL4523274"/>
<dbReference type="GlyCosmos" id="Q03146">
    <property type="glycosylation" value="4 sites, No reported glycans"/>
</dbReference>
<dbReference type="GlyGen" id="Q03146">
    <property type="glycosylation" value="5 sites"/>
</dbReference>
<dbReference type="iPTMnet" id="Q03146"/>
<dbReference type="PhosphoSitePlus" id="Q03146"/>
<dbReference type="PaxDb" id="10090-ENSMUSP00000113062"/>
<dbReference type="ProteomicsDB" id="279178">
    <molecule id="Q03146-1"/>
</dbReference>
<dbReference type="ProteomicsDB" id="279179">
    <molecule id="Q03146-2"/>
</dbReference>
<dbReference type="Antibodypedia" id="48090">
    <property type="antibodies" value="843 antibodies from 43 providers"/>
</dbReference>
<dbReference type="DNASU" id="12305"/>
<dbReference type="Ensembl" id="ENSMUST00000003628.13">
    <molecule id="Q03146-1"/>
    <property type="protein sequence ID" value="ENSMUSP00000003628.7"/>
    <property type="gene ID" value="ENSMUSG00000003534.18"/>
</dbReference>
<dbReference type="Ensembl" id="ENSMUST00000097333.10">
    <molecule id="Q03146-2"/>
    <property type="protein sequence ID" value="ENSMUSP00000094945.4"/>
    <property type="gene ID" value="ENSMUSG00000003534.18"/>
</dbReference>
<dbReference type="Ensembl" id="ENSMUST00000117301.8">
    <molecule id="Q03146-1"/>
    <property type="protein sequence ID" value="ENSMUSP00000112570.2"/>
    <property type="gene ID" value="ENSMUSG00000003534.18"/>
</dbReference>
<dbReference type="Ensembl" id="ENSMUST00000119825.8">
    <molecule id="Q03146-1"/>
    <property type="protein sequence ID" value="ENSMUSP00000113062.2"/>
    <property type="gene ID" value="ENSMUSG00000003534.18"/>
</dbReference>
<dbReference type="Ensembl" id="ENSMUST00000166980.9">
    <molecule id="Q03146-1"/>
    <property type="protein sequence ID" value="ENSMUSP00000133047.3"/>
    <property type="gene ID" value="ENSMUSG00000003534.18"/>
</dbReference>
<dbReference type="GeneID" id="12305"/>
<dbReference type="KEGG" id="mmu:12305"/>
<dbReference type="UCSC" id="uc008cih.2">
    <molecule id="Q03146-1"/>
    <property type="organism name" value="mouse"/>
</dbReference>
<dbReference type="AGR" id="MGI:99216"/>
<dbReference type="CTD" id="780"/>
<dbReference type="MGI" id="MGI:99216">
    <property type="gene designation" value="Ddr1"/>
</dbReference>
<dbReference type="VEuPathDB" id="HostDB:ENSMUSG00000003534"/>
<dbReference type="eggNOG" id="KOG1094">
    <property type="taxonomic scope" value="Eukaryota"/>
</dbReference>
<dbReference type="GeneTree" id="ENSGT00940000159733"/>
<dbReference type="HOGENOM" id="CLU_008873_2_0_1"/>
<dbReference type="InParanoid" id="Q03146"/>
<dbReference type="OMA" id="RDAEYQE"/>
<dbReference type="OrthoDB" id="6071166at2759"/>
<dbReference type="PhylomeDB" id="Q03146"/>
<dbReference type="TreeFam" id="TF317840"/>
<dbReference type="BRENDA" id="2.7.10.1">
    <property type="organism ID" value="3474"/>
</dbReference>
<dbReference type="Reactome" id="R-MMU-3000171">
    <property type="pathway name" value="Non-integrin membrane-ECM interactions"/>
</dbReference>
<dbReference type="BioGRID-ORCS" id="12305">
    <property type="hits" value="5 hits in 81 CRISPR screens"/>
</dbReference>
<dbReference type="CD-CODE" id="9A00E86C">
    <property type="entry name" value="DDR1 condensate"/>
</dbReference>
<dbReference type="ChiTaRS" id="Ddr1">
    <property type="organism name" value="mouse"/>
</dbReference>
<dbReference type="PRO" id="PR:Q03146"/>
<dbReference type="Proteomes" id="UP000000589">
    <property type="component" value="Chromosome 17"/>
</dbReference>
<dbReference type="RNAct" id="Q03146">
    <property type="molecule type" value="protein"/>
</dbReference>
<dbReference type="Bgee" id="ENSMUSG00000003534">
    <property type="expression patterns" value="Expressed in ciliary body and 263 other cell types or tissues"/>
</dbReference>
<dbReference type="ExpressionAtlas" id="Q03146">
    <property type="expression patterns" value="baseline and differential"/>
</dbReference>
<dbReference type="GO" id="GO:0005886">
    <property type="term" value="C:plasma membrane"/>
    <property type="evidence" value="ECO:0000314"/>
    <property type="project" value="MGI"/>
</dbReference>
<dbReference type="GO" id="GO:0043235">
    <property type="term" value="C:receptor complex"/>
    <property type="evidence" value="ECO:0000266"/>
    <property type="project" value="MGI"/>
</dbReference>
<dbReference type="GO" id="GO:0005524">
    <property type="term" value="F:ATP binding"/>
    <property type="evidence" value="ECO:0007669"/>
    <property type="project" value="UniProtKB-KW"/>
</dbReference>
<dbReference type="GO" id="GO:0005518">
    <property type="term" value="F:collagen binding"/>
    <property type="evidence" value="ECO:0000314"/>
    <property type="project" value="MGI"/>
</dbReference>
<dbReference type="GO" id="GO:0046872">
    <property type="term" value="F:metal ion binding"/>
    <property type="evidence" value="ECO:0007669"/>
    <property type="project" value="UniProtKB-KW"/>
</dbReference>
<dbReference type="GO" id="GO:0038062">
    <property type="term" value="F:protein tyrosine kinase collagen receptor activity"/>
    <property type="evidence" value="ECO:0000250"/>
    <property type="project" value="UniProtKB"/>
</dbReference>
<dbReference type="GO" id="GO:0061564">
    <property type="term" value="P:axon development"/>
    <property type="evidence" value="ECO:0000315"/>
    <property type="project" value="MGI"/>
</dbReference>
<dbReference type="GO" id="GO:0060444">
    <property type="term" value="P:branching involved in mammary gland duct morphogenesis"/>
    <property type="evidence" value="ECO:0000315"/>
    <property type="project" value="MGI"/>
</dbReference>
<dbReference type="GO" id="GO:0008283">
    <property type="term" value="P:cell population proliferation"/>
    <property type="evidence" value="ECO:0000315"/>
    <property type="project" value="MGI"/>
</dbReference>
<dbReference type="GO" id="GO:0038063">
    <property type="term" value="P:collagen-activated tyrosine kinase receptor signaling pathway"/>
    <property type="evidence" value="ECO:0000314"/>
    <property type="project" value="MGI"/>
</dbReference>
<dbReference type="GO" id="GO:0043583">
    <property type="term" value="P:ear development"/>
    <property type="evidence" value="ECO:0000315"/>
    <property type="project" value="MGI"/>
</dbReference>
<dbReference type="GO" id="GO:0007566">
    <property type="term" value="P:embryo implantation"/>
    <property type="evidence" value="ECO:0000315"/>
    <property type="project" value="MGI"/>
</dbReference>
<dbReference type="GO" id="GO:0007595">
    <property type="term" value="P:lactation"/>
    <property type="evidence" value="ECO:0007669"/>
    <property type="project" value="UniProtKB-KW"/>
</dbReference>
<dbReference type="GO" id="GO:0060749">
    <property type="term" value="P:mammary gland alveolus development"/>
    <property type="evidence" value="ECO:0000315"/>
    <property type="project" value="MGI"/>
</dbReference>
<dbReference type="GO" id="GO:0008285">
    <property type="term" value="P:negative regulation of cell population proliferation"/>
    <property type="evidence" value="ECO:0000315"/>
    <property type="project" value="MGI"/>
</dbReference>
<dbReference type="GO" id="GO:1990138">
    <property type="term" value="P:neuron projection extension"/>
    <property type="evidence" value="ECO:0000315"/>
    <property type="project" value="MGI"/>
</dbReference>
<dbReference type="GO" id="GO:0038083">
    <property type="term" value="P:peptidyl-tyrosine autophosphorylation"/>
    <property type="evidence" value="ECO:0000250"/>
    <property type="project" value="UniProtKB"/>
</dbReference>
<dbReference type="GO" id="GO:0001558">
    <property type="term" value="P:regulation of cell growth"/>
    <property type="evidence" value="ECO:0000315"/>
    <property type="project" value="MGI"/>
</dbReference>
<dbReference type="GO" id="GO:0001952">
    <property type="term" value="P:regulation of cell-matrix adhesion"/>
    <property type="evidence" value="ECO:0000315"/>
    <property type="project" value="MGI"/>
</dbReference>
<dbReference type="GO" id="GO:0010715">
    <property type="term" value="P:regulation of extracellular matrix disassembly"/>
    <property type="evidence" value="ECO:0000315"/>
    <property type="project" value="UniProtKB"/>
</dbReference>
<dbReference type="GO" id="GO:0014909">
    <property type="term" value="P:smooth muscle cell migration"/>
    <property type="evidence" value="ECO:0000315"/>
    <property type="project" value="UniProtKB"/>
</dbReference>
<dbReference type="GO" id="GO:0061302">
    <property type="term" value="P:smooth muscle cell-matrix adhesion"/>
    <property type="evidence" value="ECO:0000315"/>
    <property type="project" value="UniProtKB"/>
</dbReference>
<dbReference type="GO" id="GO:0044319">
    <property type="term" value="P:wound healing, spreading of cells"/>
    <property type="evidence" value="ECO:0000315"/>
    <property type="project" value="UniProtKB"/>
</dbReference>
<dbReference type="CDD" id="cd00057">
    <property type="entry name" value="FA58C"/>
    <property type="match status" value="1"/>
</dbReference>
<dbReference type="FunFam" id="2.60.120.260:FF:000007">
    <property type="entry name" value="Discoidin domain receptor tyrosine kinase 1"/>
    <property type="match status" value="1"/>
</dbReference>
<dbReference type="FunFam" id="1.10.510.10:FF:000053">
    <property type="entry name" value="Epithelial discoidin domain-containing receptor 1"/>
    <property type="match status" value="1"/>
</dbReference>
<dbReference type="FunFam" id="3.30.200.20:FF:000082">
    <property type="entry name" value="Epithelial discoidin domain-containing receptor 1"/>
    <property type="match status" value="1"/>
</dbReference>
<dbReference type="FunFam" id="2.60.120.1190:FF:000002">
    <property type="entry name" value="epithelial discoidin domain-containing receptor 1"/>
    <property type="match status" value="1"/>
</dbReference>
<dbReference type="Gene3D" id="2.60.120.1190">
    <property type="match status" value="1"/>
</dbReference>
<dbReference type="Gene3D" id="2.60.120.260">
    <property type="entry name" value="Galactose-binding domain-like"/>
    <property type="match status" value="1"/>
</dbReference>
<dbReference type="Gene3D" id="3.30.200.20">
    <property type="entry name" value="Phosphorylase Kinase, domain 1"/>
    <property type="match status" value="1"/>
</dbReference>
<dbReference type="Gene3D" id="1.10.510.10">
    <property type="entry name" value="Transferase(Phosphotransferase) domain 1"/>
    <property type="match status" value="1"/>
</dbReference>
<dbReference type="InterPro" id="IPR048525">
    <property type="entry name" value="DDR1-2_DS-like"/>
</dbReference>
<dbReference type="InterPro" id="IPR000421">
    <property type="entry name" value="FA58C"/>
</dbReference>
<dbReference type="InterPro" id="IPR008979">
    <property type="entry name" value="Galactose-bd-like_sf"/>
</dbReference>
<dbReference type="InterPro" id="IPR011009">
    <property type="entry name" value="Kinase-like_dom_sf"/>
</dbReference>
<dbReference type="InterPro" id="IPR000719">
    <property type="entry name" value="Prot_kinase_dom"/>
</dbReference>
<dbReference type="InterPro" id="IPR050122">
    <property type="entry name" value="RTK"/>
</dbReference>
<dbReference type="InterPro" id="IPR001245">
    <property type="entry name" value="Ser-Thr/Tyr_kinase_cat_dom"/>
</dbReference>
<dbReference type="InterPro" id="IPR008266">
    <property type="entry name" value="Tyr_kinase_AS"/>
</dbReference>
<dbReference type="InterPro" id="IPR020635">
    <property type="entry name" value="Tyr_kinase_cat_dom"/>
</dbReference>
<dbReference type="InterPro" id="IPR002011">
    <property type="entry name" value="Tyr_kinase_rcpt_2_CS"/>
</dbReference>
<dbReference type="PANTHER" id="PTHR24416:SF333">
    <property type="entry name" value="EPITHELIAL DISCOIDIN DOMAIN-CONTAINING RECEPTOR 1"/>
    <property type="match status" value="1"/>
</dbReference>
<dbReference type="PANTHER" id="PTHR24416">
    <property type="entry name" value="TYROSINE-PROTEIN KINASE RECEPTOR"/>
    <property type="match status" value="1"/>
</dbReference>
<dbReference type="Pfam" id="PF21114">
    <property type="entry name" value="DDR1-2_DS-like"/>
    <property type="match status" value="1"/>
</dbReference>
<dbReference type="Pfam" id="PF00754">
    <property type="entry name" value="F5_F8_type_C"/>
    <property type="match status" value="1"/>
</dbReference>
<dbReference type="Pfam" id="PF07714">
    <property type="entry name" value="PK_Tyr_Ser-Thr"/>
    <property type="match status" value="1"/>
</dbReference>
<dbReference type="PRINTS" id="PR00109">
    <property type="entry name" value="TYRKINASE"/>
</dbReference>
<dbReference type="SMART" id="SM00231">
    <property type="entry name" value="FA58C"/>
    <property type="match status" value="1"/>
</dbReference>
<dbReference type="SMART" id="SM00219">
    <property type="entry name" value="TyrKc"/>
    <property type="match status" value="1"/>
</dbReference>
<dbReference type="SUPFAM" id="SSF49785">
    <property type="entry name" value="Galactose-binding domain-like"/>
    <property type="match status" value="1"/>
</dbReference>
<dbReference type="SUPFAM" id="SSF56112">
    <property type="entry name" value="Protein kinase-like (PK-like)"/>
    <property type="match status" value="1"/>
</dbReference>
<dbReference type="PROSITE" id="PS01285">
    <property type="entry name" value="FA58C_1"/>
    <property type="match status" value="1"/>
</dbReference>
<dbReference type="PROSITE" id="PS01286">
    <property type="entry name" value="FA58C_2"/>
    <property type="match status" value="1"/>
</dbReference>
<dbReference type="PROSITE" id="PS50022">
    <property type="entry name" value="FA58C_3"/>
    <property type="match status" value="1"/>
</dbReference>
<dbReference type="PROSITE" id="PS50011">
    <property type="entry name" value="PROTEIN_KINASE_DOM"/>
    <property type="match status" value="1"/>
</dbReference>
<dbReference type="PROSITE" id="PS00109">
    <property type="entry name" value="PROTEIN_KINASE_TYR"/>
    <property type="match status" value="1"/>
</dbReference>
<dbReference type="PROSITE" id="PS00239">
    <property type="entry name" value="RECEPTOR_TYR_KIN_II"/>
    <property type="match status" value="1"/>
</dbReference>
<organism>
    <name type="scientific">Mus musculus</name>
    <name type="common">Mouse</name>
    <dbReference type="NCBI Taxonomy" id="10090"/>
    <lineage>
        <taxon>Eukaryota</taxon>
        <taxon>Metazoa</taxon>
        <taxon>Chordata</taxon>
        <taxon>Craniata</taxon>
        <taxon>Vertebrata</taxon>
        <taxon>Euteleostomi</taxon>
        <taxon>Mammalia</taxon>
        <taxon>Eutheria</taxon>
        <taxon>Euarchontoglires</taxon>
        <taxon>Glires</taxon>
        <taxon>Rodentia</taxon>
        <taxon>Myomorpha</taxon>
        <taxon>Muroidea</taxon>
        <taxon>Muridae</taxon>
        <taxon>Murinae</taxon>
        <taxon>Mus</taxon>
        <taxon>Mus</taxon>
    </lineage>
</organism>
<name>DDR1_MOUSE</name>
<keyword id="KW-0025">Alternative splicing</keyword>
<keyword id="KW-0067">ATP-binding</keyword>
<keyword id="KW-0106">Calcium</keyword>
<keyword id="KW-1003">Cell membrane</keyword>
<keyword id="KW-1015">Disulfide bond</keyword>
<keyword id="KW-0325">Glycoprotein</keyword>
<keyword id="KW-0418">Kinase</keyword>
<keyword id="KW-0421">Lactation</keyword>
<keyword id="KW-0472">Membrane</keyword>
<keyword id="KW-0479">Metal-binding</keyword>
<keyword id="KW-0547">Nucleotide-binding</keyword>
<keyword id="KW-0597">Phosphoprotein</keyword>
<keyword id="KW-0635">Pregnancy</keyword>
<keyword id="KW-0675">Receptor</keyword>
<keyword id="KW-1185">Reference proteome</keyword>
<keyword id="KW-0732">Signal</keyword>
<keyword id="KW-0808">Transferase</keyword>
<keyword id="KW-0812">Transmembrane</keyword>
<keyword id="KW-1133">Transmembrane helix</keyword>
<keyword id="KW-0829">Tyrosine-protein kinase</keyword>
<comment type="function">
    <text evidence="1 9">Tyrosine kinase that functions as a cell surface receptor for fibrillar collagen and regulates cell attachment to the extracellular matrix, remodeling of the extracellular matrix, cell migration, differentiation, survival and cell proliferation. Collagen binding triggers a signaling pathway that involves SRC and leads to the activation of MAP kinases. Regulates remodeling of the extracellular matrix by up-regulation of the matrix metalloproteinases MMP2, MMP7 and MMP9, and thereby facilitates cell migration and wound healing, but also tumor cell invasion. Promotes smooth muscle cell migration, and thereby contributes to arterial wound healing. Phosphorylates PTPN11 (By similarity). Required for normal blastocyst implantation during pregnancy, for normal mammary gland differentiation and normal lactation. Required for normal ear morphology and normal hearing.</text>
</comment>
<comment type="catalytic activity">
    <reaction evidence="6">
        <text>L-tyrosyl-[protein] + ATP = O-phospho-L-tyrosyl-[protein] + ADP + H(+)</text>
        <dbReference type="Rhea" id="RHEA:10596"/>
        <dbReference type="Rhea" id="RHEA-COMP:10136"/>
        <dbReference type="Rhea" id="RHEA-COMP:20101"/>
        <dbReference type="ChEBI" id="CHEBI:15378"/>
        <dbReference type="ChEBI" id="CHEBI:30616"/>
        <dbReference type="ChEBI" id="CHEBI:46858"/>
        <dbReference type="ChEBI" id="CHEBI:61978"/>
        <dbReference type="ChEBI" id="CHEBI:456216"/>
        <dbReference type="EC" id="2.7.10.1"/>
    </reaction>
</comment>
<comment type="subunit">
    <text evidence="1">Homodimer. Interacts (via PPxY motif) with WWC1 (via WW domains) in a collagen-regulated manner. Forms a tripartite complex with WWC1 and PRKCZ, but predominantly in the absence of collagen. Interacts (tyrosine phosphorylated) with SHC1. Interacts with SRC. Interacts with MYH9. Interacts with CDH1. Interacts with PTPN11. Interacts with NCK2 (By similarity).</text>
</comment>
<comment type="subcellular location">
    <subcellularLocation>
        <location>Cell membrane</location>
        <topology>Single-pass type I membrane protein</topology>
    </subcellularLocation>
</comment>
<comment type="alternative products">
    <event type="alternative splicing"/>
    <isoform>
        <id>Q03146-1</id>
        <name>1</name>
        <name>CAK I</name>
        <sequence type="displayed"/>
    </isoform>
    <isoform>
        <id>Q03146-2</id>
        <name>2</name>
        <name>CAK II</name>
        <sequence type="described" ref="VSP_002954"/>
    </isoform>
</comment>
<comment type="tissue specificity">
    <text evidence="11">Detected in the cochlea and the organ of Corti in the inner ear. Isoform 1 is predominant and is expressed in developing embryo and adult brain. Isoform 2 is expressed in various epithelial cells.</text>
</comment>
<comment type="PTM">
    <text evidence="1">Autophosphorylated in response to fibrillar collagen binding.</text>
</comment>
<comment type="disruption phenotype">
    <text evidence="8 10 11">Mice are born at the expected Mendelian rate, but female mice are dwarfs and most of them are unable to bear offspring, due to defects in blastocyte implantation in the uterus. About one fifth can bear offspring, but for these the mammary gland fails to undergo proper differentiation during pregnancy, with hyperproliferation and abnormal branching of the mammary ducts, leading to a lactation defect. In addition, mice exhibit hearing loss, due to alterations of the inner ear. Mice display poor calcification of the fibula. They also exhibit defects in the structure of the slit diaphragm in kidney glomeruli, leading to proteinuria, but do not show overt signs of kidney dysfunction.</text>
</comment>
<comment type="similarity">
    <text evidence="5">Belongs to the protein kinase superfamily. Tyr protein kinase family. Insulin receptor subfamily.</text>
</comment>
<sequence>MGTGTLSSLLLLLLLVTIGDADMKGHFDPAKCRYALGMQDRTIPDSDISVSSSWSDSTAARHSRLESSDGDGAWCPAGPVFPKEEEYLQVDLRRLHLVALVGTQGRHAGGLGKEFSRSYRLRYSRDGRRWMDWKDRWGQEVISGNEDPGGVVLKDLGPPMVARLVRFYPRADRVMSVCLRVELYGCLWRDGLLSYTAPVGQTMQLSEVMVHLNDSTYDGYTAGGLQYGGLGQLADGVVGLDDFRQSQELRVWPGYDYVGWSNQSFPTGYVEMEFEFDRLRTFQTMQVHCNNMHTLGARLPGGVECRFKRGPAMAWEGEPVRHALGGSLGDPRARAISVPLGGHVGRFLQCRFLFAGPWLLFSEISFISDVVNDSSDTFPPAPWWPPGPPPTNFSSLELEPRGQQPVAKAEGSPTAILIGCLVAIILLLLLIIALMLWRLHWRRLLSKAERRVLEEELTVHLSVPGDTILINNRPGPREPPPYQEPRPRGTPPHSAPCVPNGSALLLSNPAYRLLLATYARPPRGPGPPTPAWAKPTNTQACSGDYMEPEKPGAPLLPPPPQNSVPHYAEADIVTLQGVTGGNTYAVPALPPGAVGDGPPRVDFPRSRLRFKEKLGEGQFGEVHLCEVEDPQDLVSSDFPISVHKGHPLLVAVKILRPDATKNARNDFLKEVKIMSRLKDPNIIRLLGVCVQDDPLCMITDYMENGDLNQFLSARQLENKATQGLSGDTESDQGPTISYPMLLHVGAQIASGMRYLATLNFVHRDLATRNCLVGENFTIKIADFGMSRNLYAGDYYRVQGRAVLPIRWMAWECILMGKFTTASDVWAFGVTLWEVLMLCRSQPFGQLTDEQVIENAGEFFRDQGRQVYLSRPPACPQTLYELMLRCWSREPEQRPPFAQLHRFLADDALNTV</sequence>
<protein>
    <recommendedName>
        <fullName>Epithelial discoidin domain-containing receptor 1</fullName>
        <shortName>Epithelial discoidin domain receptor 1</shortName>
        <ecNumber>2.7.10.1</ecNumber>
    </recommendedName>
    <alternativeName>
        <fullName>CD167 antigen-like family member A</fullName>
    </alternativeName>
    <alternativeName>
        <fullName>Cell adhesion kinase</fullName>
    </alternativeName>
    <alternativeName>
        <fullName>Discoidin receptor tyrosine kinase</fullName>
    </alternativeName>
    <alternativeName>
        <fullName>Protein-tyrosine kinase MPK-6</fullName>
    </alternativeName>
    <alternativeName>
        <fullName>Tyrosine kinase DDR</fullName>
    </alternativeName>
    <alternativeName>
        <fullName>Tyrosine-protein kinase CAK</fullName>
    </alternativeName>
    <cdAntigenName>CD167a</cdAntigenName>
</protein>
<feature type="signal peptide" evidence="3">
    <location>
        <begin position="1"/>
        <end position="19"/>
    </location>
</feature>
<feature type="chain" id="PRO_0000016743" description="Epithelial discoidin domain-containing receptor 1">
    <location>
        <begin position="20"/>
        <end position="911"/>
    </location>
</feature>
<feature type="topological domain" description="Extracellular" evidence="3">
    <location>
        <begin position="22"/>
        <end position="415"/>
    </location>
</feature>
<feature type="transmembrane region" description="Helical" evidence="3">
    <location>
        <begin position="416"/>
        <end position="436"/>
    </location>
</feature>
<feature type="topological domain" description="Cytoplasmic" evidence="3">
    <location>
        <begin position="437"/>
        <end position="911"/>
    </location>
</feature>
<feature type="domain" description="F5/8 type C" evidence="4">
    <location>
        <begin position="32"/>
        <end position="186"/>
    </location>
</feature>
<feature type="domain" description="Protein kinase" evidence="5">
    <location>
        <begin position="608"/>
        <end position="903"/>
    </location>
</feature>
<feature type="region of interest" description="DS-like domain" evidence="1">
    <location>
        <begin position="193"/>
        <end position="369"/>
    </location>
</feature>
<feature type="region of interest" description="Disordered" evidence="7">
    <location>
        <begin position="468"/>
        <end position="496"/>
    </location>
</feature>
<feature type="short sequence motif" description="PPxY motif">
    <location>
        <begin position="479"/>
        <end position="482"/>
    </location>
</feature>
<feature type="compositionally biased region" description="Pro residues" evidence="7">
    <location>
        <begin position="477"/>
        <end position="494"/>
    </location>
</feature>
<feature type="active site" description="Proton acceptor" evidence="5 6">
    <location>
        <position position="764"/>
    </location>
</feature>
<feature type="binding site" evidence="1">
    <location>
        <position position="213"/>
    </location>
    <ligand>
        <name>Ca(2+)</name>
        <dbReference type="ChEBI" id="CHEBI:29108"/>
        <label>1</label>
    </ligand>
</feature>
<feature type="binding site" evidence="1">
    <location>
        <position position="232"/>
    </location>
    <ligand>
        <name>Ca(2+)</name>
        <dbReference type="ChEBI" id="CHEBI:29108"/>
        <label>1</label>
    </ligand>
</feature>
<feature type="binding site" evidence="1">
    <location>
        <position position="232"/>
    </location>
    <ligand>
        <name>Ca(2+)</name>
        <dbReference type="ChEBI" id="CHEBI:29108"/>
        <label>2</label>
    </ligand>
</feature>
<feature type="binding site" evidence="1">
    <location>
        <position position="235"/>
    </location>
    <ligand>
        <name>Ca(2+)</name>
        <dbReference type="ChEBI" id="CHEBI:29108"/>
        <label>2</label>
    </ligand>
</feature>
<feature type="binding site" evidence="1">
    <location>
        <position position="237"/>
    </location>
    <ligand>
        <name>Ca(2+)</name>
        <dbReference type="ChEBI" id="CHEBI:29108"/>
        <label>2</label>
    </ligand>
</feature>
<feature type="binding site" evidence="1">
    <location>
        <position position="255"/>
    </location>
    <ligand>
        <name>Ca(2+)</name>
        <dbReference type="ChEBI" id="CHEBI:29108"/>
        <label>1</label>
    </ligand>
</feature>
<feature type="binding site" evidence="1">
    <location>
        <position position="257"/>
    </location>
    <ligand>
        <name>Ca(2+)</name>
        <dbReference type="ChEBI" id="CHEBI:29108"/>
        <label>1</label>
    </ligand>
</feature>
<feature type="binding site" evidence="1">
    <location>
        <position position="362"/>
    </location>
    <ligand>
        <name>Ca(2+)</name>
        <dbReference type="ChEBI" id="CHEBI:29108"/>
        <label>2</label>
    </ligand>
</feature>
<feature type="binding site" evidence="1">
    <location>
        <position position="363"/>
    </location>
    <ligand>
        <name>Ca(2+)</name>
        <dbReference type="ChEBI" id="CHEBI:29108"/>
        <label>2</label>
    </ligand>
</feature>
<feature type="binding site" evidence="5">
    <location>
        <begin position="614"/>
        <end position="622"/>
    </location>
    <ligand>
        <name>ATP</name>
        <dbReference type="ChEBI" id="CHEBI:30616"/>
    </ligand>
</feature>
<feature type="binding site" evidence="5">
    <location>
        <position position="653"/>
    </location>
    <ligand>
        <name>ATP</name>
        <dbReference type="ChEBI" id="CHEBI:30616"/>
    </ligand>
</feature>
<feature type="modified residue" description="Phosphotyrosine; by autocatalysis" evidence="2">
    <location>
        <position position="482"/>
    </location>
</feature>
<feature type="modified residue" description="Phosphotyrosine; by autocatalysis" evidence="2">
    <location>
        <position position="511"/>
    </location>
</feature>
<feature type="modified residue" description="Phosphotyrosine; by autocatalysis" evidence="2">
    <location>
        <position position="518"/>
    </location>
</feature>
<feature type="modified residue" description="Phosphotyrosine; by autocatalysis" evidence="2">
    <location>
        <position position="738"/>
    </location>
</feature>
<feature type="modified residue" description="Phosphotyrosine; by autocatalysis" evidence="2">
    <location>
        <position position="790"/>
    </location>
</feature>
<feature type="modified residue" description="Phosphotyrosine; by autocatalysis" evidence="2">
    <location>
        <position position="794"/>
    </location>
</feature>
<feature type="modified residue" description="Phosphotyrosine; by autocatalysis" evidence="2">
    <location>
        <position position="795"/>
    </location>
</feature>
<feature type="glycosylation site" description="N-linked (GlcNAc...) asparagine" evidence="3">
    <location>
        <position position="213"/>
    </location>
</feature>
<feature type="glycosylation site" description="N-linked (GlcNAc...) asparagine" evidence="3">
    <location>
        <position position="262"/>
    </location>
</feature>
<feature type="glycosylation site" description="N-linked (GlcNAc...) asparagine" evidence="3">
    <location>
        <position position="372"/>
    </location>
</feature>
<feature type="glycosylation site" description="N-linked (GlcNAc...) asparagine" evidence="3">
    <location>
        <position position="392"/>
    </location>
</feature>
<feature type="disulfide bond" evidence="4">
    <location>
        <begin position="32"/>
        <end position="186"/>
    </location>
</feature>
<feature type="disulfide bond" evidence="4">
    <location>
        <begin position="75"/>
        <end position="178"/>
    </location>
</feature>
<feature type="disulfide bond" evidence="4">
    <location>
        <begin position="305"/>
        <end position="350"/>
    </location>
</feature>
<feature type="splice variant" id="VSP_002954" description="In isoform 2." evidence="12">
    <location>
        <begin position="503"/>
        <end position="539"/>
    </location>
</feature>